<proteinExistence type="inferred from homology"/>
<sequence length="465" mass="50176">MVTQATSVRWQLWIVAFGFFMQTLDTTIVNTALPSIAASLGENPLRMQSVIVSYVLTVAVMLPASGWLADRIGVKWVFFSAIILFTFGSLMCAQSATLNELILSRVLQGVGGAMMVPVGRLTVMKIVPREQYMAAMAFVTLPGQIGPLVGPALGGFLVEFASWHWIFLINLPVGVIGALATLLLMPNHKMSTRRFDISGFIMLAIGMATLTLALDGHTGLGLSPLAIAGLILCGVIALGSYWWHALGNRFALFSLHLFKNKIYTLGLVGSMSARIGSGMLPFMTPIFLQIGLGFSPFHAGLMMIPMIIGSMGMKRIIVQVVNRFGYRRVLVNATLLLAVVSLSLPLVAIMGWTLLMPVVLFFQGMLNALRFSTMNTLTLKTLPDRLASSGNSLLSMAMQLSMSIGVSTAGILLGTFAHHQVATNTPATHSAFLYSYLCMAIIIALPALIFNRVPPDTGANRHLAR</sequence>
<reference key="1">
    <citation type="submission" date="2008-04" db="EMBL/GenBank/DDBJ databases">
        <title>Complete sequence of Yersinia pseudotuberculosis PB1/+.</title>
        <authorList>
            <person name="Copeland A."/>
            <person name="Lucas S."/>
            <person name="Lapidus A."/>
            <person name="Glavina del Rio T."/>
            <person name="Dalin E."/>
            <person name="Tice H."/>
            <person name="Bruce D."/>
            <person name="Goodwin L."/>
            <person name="Pitluck S."/>
            <person name="Munk A.C."/>
            <person name="Brettin T."/>
            <person name="Detter J.C."/>
            <person name="Han C."/>
            <person name="Tapia R."/>
            <person name="Schmutz J."/>
            <person name="Larimer F."/>
            <person name="Land M."/>
            <person name="Hauser L."/>
            <person name="Challacombe J.F."/>
            <person name="Green L."/>
            <person name="Lindler L.E."/>
            <person name="Nikolich M.P."/>
            <person name="Richardson P."/>
        </authorList>
    </citation>
    <scope>NUCLEOTIDE SEQUENCE [LARGE SCALE GENOMIC DNA]</scope>
    <source>
        <strain>PB1/+</strain>
    </source>
</reference>
<keyword id="KW-0997">Cell inner membrane</keyword>
<keyword id="KW-1003">Cell membrane</keyword>
<keyword id="KW-0472">Membrane</keyword>
<keyword id="KW-0812">Transmembrane</keyword>
<keyword id="KW-1133">Transmembrane helix</keyword>
<keyword id="KW-0813">Transport</keyword>
<dbReference type="EMBL" id="CP001048">
    <property type="protein sequence ID" value="ACC89879.1"/>
    <property type="molecule type" value="Genomic_DNA"/>
</dbReference>
<dbReference type="RefSeq" id="WP_002209795.1">
    <property type="nucleotide sequence ID" value="NZ_CP009780.1"/>
</dbReference>
<dbReference type="SMR" id="B2K9M2"/>
<dbReference type="KEGG" id="ypb:YPTS_2922"/>
<dbReference type="PATRIC" id="fig|502801.10.peg.2351"/>
<dbReference type="GO" id="GO:0005886">
    <property type="term" value="C:plasma membrane"/>
    <property type="evidence" value="ECO:0007669"/>
    <property type="project" value="UniProtKB-SubCell"/>
</dbReference>
<dbReference type="GO" id="GO:0022857">
    <property type="term" value="F:transmembrane transporter activity"/>
    <property type="evidence" value="ECO:0007669"/>
    <property type="project" value="UniProtKB-UniRule"/>
</dbReference>
<dbReference type="CDD" id="cd17503">
    <property type="entry name" value="MFS_LmrB_MDR_like"/>
    <property type="match status" value="1"/>
</dbReference>
<dbReference type="FunFam" id="1.20.1250.20:FF:000021">
    <property type="entry name" value="Putative multidrug resistance protein MdtD"/>
    <property type="match status" value="1"/>
</dbReference>
<dbReference type="FunFam" id="1.20.1720.10:FF:000001">
    <property type="entry name" value="Putative multidrug resistance protein MdtD"/>
    <property type="match status" value="1"/>
</dbReference>
<dbReference type="Gene3D" id="1.20.1250.20">
    <property type="entry name" value="MFS general substrate transporter like domains"/>
    <property type="match status" value="1"/>
</dbReference>
<dbReference type="Gene3D" id="1.20.1720.10">
    <property type="entry name" value="Multidrug resistance protein D"/>
    <property type="match status" value="1"/>
</dbReference>
<dbReference type="HAMAP" id="MF_01577">
    <property type="entry name" value="MFS_MdtD"/>
    <property type="match status" value="1"/>
</dbReference>
<dbReference type="InterPro" id="IPR004638">
    <property type="entry name" value="EmrB-like"/>
</dbReference>
<dbReference type="InterPro" id="IPR011701">
    <property type="entry name" value="MFS"/>
</dbReference>
<dbReference type="InterPro" id="IPR020846">
    <property type="entry name" value="MFS_dom"/>
</dbReference>
<dbReference type="InterPro" id="IPR036259">
    <property type="entry name" value="MFS_trans_sf"/>
</dbReference>
<dbReference type="InterPro" id="IPR023721">
    <property type="entry name" value="Multi-R_MdtD"/>
</dbReference>
<dbReference type="NCBIfam" id="TIGR00711">
    <property type="entry name" value="efflux_EmrB"/>
    <property type="match status" value="1"/>
</dbReference>
<dbReference type="NCBIfam" id="NF007799">
    <property type="entry name" value="PRK10504.1"/>
    <property type="match status" value="1"/>
</dbReference>
<dbReference type="PANTHER" id="PTHR42718:SF46">
    <property type="entry name" value="BLR6921 PROTEIN"/>
    <property type="match status" value="1"/>
</dbReference>
<dbReference type="PANTHER" id="PTHR42718">
    <property type="entry name" value="MAJOR FACILITATOR SUPERFAMILY MULTIDRUG TRANSPORTER MFSC"/>
    <property type="match status" value="1"/>
</dbReference>
<dbReference type="Pfam" id="PF07690">
    <property type="entry name" value="MFS_1"/>
    <property type="match status" value="1"/>
</dbReference>
<dbReference type="PRINTS" id="PR01036">
    <property type="entry name" value="TCRTETB"/>
</dbReference>
<dbReference type="SUPFAM" id="SSF103473">
    <property type="entry name" value="MFS general substrate transporter"/>
    <property type="match status" value="1"/>
</dbReference>
<dbReference type="PROSITE" id="PS50850">
    <property type="entry name" value="MFS"/>
    <property type="match status" value="1"/>
</dbReference>
<protein>
    <recommendedName>
        <fullName evidence="1">Putative multidrug resistance protein MdtD</fullName>
    </recommendedName>
</protein>
<accession>B2K9M2</accession>
<gene>
    <name evidence="1" type="primary">mdtD</name>
    <name type="ordered locus">YPTS_2922</name>
</gene>
<organism>
    <name type="scientific">Yersinia pseudotuberculosis serotype IB (strain PB1/+)</name>
    <dbReference type="NCBI Taxonomy" id="502801"/>
    <lineage>
        <taxon>Bacteria</taxon>
        <taxon>Pseudomonadati</taxon>
        <taxon>Pseudomonadota</taxon>
        <taxon>Gammaproteobacteria</taxon>
        <taxon>Enterobacterales</taxon>
        <taxon>Yersiniaceae</taxon>
        <taxon>Yersinia</taxon>
    </lineage>
</organism>
<evidence type="ECO:0000255" key="1">
    <source>
        <dbReference type="HAMAP-Rule" id="MF_01577"/>
    </source>
</evidence>
<name>MDTD_YERPB</name>
<comment type="subcellular location">
    <subcellularLocation>
        <location evidence="1">Cell inner membrane</location>
        <topology evidence="1">Multi-pass membrane protein</topology>
    </subcellularLocation>
</comment>
<comment type="similarity">
    <text evidence="1">Belongs to the major facilitator superfamily. TCR/Tet family.</text>
</comment>
<feature type="chain" id="PRO_0000365294" description="Putative multidrug resistance protein MdtD">
    <location>
        <begin position="1"/>
        <end position="465"/>
    </location>
</feature>
<feature type="transmembrane region" description="Helical" evidence="1">
    <location>
        <begin position="12"/>
        <end position="32"/>
    </location>
</feature>
<feature type="transmembrane region" description="Helical" evidence="1">
    <location>
        <begin position="49"/>
        <end position="69"/>
    </location>
</feature>
<feature type="transmembrane region" description="Helical" evidence="1">
    <location>
        <begin position="72"/>
        <end position="92"/>
    </location>
</feature>
<feature type="transmembrane region" description="Helical" evidence="1">
    <location>
        <begin position="102"/>
        <end position="124"/>
    </location>
</feature>
<feature type="transmembrane region" description="Helical" evidence="1">
    <location>
        <begin position="138"/>
        <end position="158"/>
    </location>
</feature>
<feature type="transmembrane region" description="Helical" evidence="1">
    <location>
        <begin position="165"/>
        <end position="185"/>
    </location>
</feature>
<feature type="transmembrane region" description="Helical" evidence="1">
    <location>
        <begin position="195"/>
        <end position="215"/>
    </location>
</feature>
<feature type="transmembrane region" description="Helical" evidence="1">
    <location>
        <begin position="219"/>
        <end position="239"/>
    </location>
</feature>
<feature type="transmembrane region" description="Helical" evidence="1">
    <location>
        <begin position="267"/>
        <end position="287"/>
    </location>
</feature>
<feature type="transmembrane region" description="Helical" evidence="1">
    <location>
        <begin position="290"/>
        <end position="310"/>
    </location>
</feature>
<feature type="transmembrane region" description="Helical" evidence="1">
    <location>
        <begin position="342"/>
        <end position="362"/>
    </location>
</feature>
<feature type="transmembrane region" description="Helical" evidence="1">
    <location>
        <begin position="393"/>
        <end position="413"/>
    </location>
</feature>
<feature type="transmembrane region" description="Helical" evidence="1">
    <location>
        <begin position="430"/>
        <end position="450"/>
    </location>
</feature>